<gene>
    <name evidence="1" type="primary">ruvA</name>
    <name type="ordered locus">CLM_3476</name>
</gene>
<comment type="function">
    <text evidence="1">The RuvA-RuvB-RuvC complex processes Holliday junction (HJ) DNA during genetic recombination and DNA repair, while the RuvA-RuvB complex plays an important role in the rescue of blocked DNA replication forks via replication fork reversal (RFR). RuvA specifically binds to HJ cruciform DNA, conferring on it an open structure. The RuvB hexamer acts as an ATP-dependent pump, pulling dsDNA into and through the RuvAB complex. HJ branch migration allows RuvC to scan DNA until it finds its consensus sequence, where it cleaves and resolves the cruciform DNA.</text>
</comment>
<comment type="subunit">
    <text evidence="1">Homotetramer. Forms an RuvA(8)-RuvB(12)-Holliday junction (HJ) complex. HJ DNA is sandwiched between 2 RuvA tetramers; dsDNA enters through RuvA and exits via RuvB. An RuvB hexamer assembles on each DNA strand where it exits the tetramer. Each RuvB hexamer is contacted by two RuvA subunits (via domain III) on 2 adjacent RuvB subunits; this complex drives branch migration. In the full resolvosome a probable DNA-RuvA(4)-RuvB(12)-RuvC(2) complex forms which resolves the HJ.</text>
</comment>
<comment type="subcellular location">
    <subcellularLocation>
        <location evidence="1">Cytoplasm</location>
    </subcellularLocation>
</comment>
<comment type="domain">
    <text evidence="1">Has three domains with a flexible linker between the domains II and III and assumes an 'L' shape. Domain III is highly mobile and contacts RuvB.</text>
</comment>
<comment type="similarity">
    <text evidence="1">Belongs to the RuvA family.</text>
</comment>
<accession>C1FKG2</accession>
<name>RUVA_CLOBJ</name>
<keyword id="KW-0963">Cytoplasm</keyword>
<keyword id="KW-0227">DNA damage</keyword>
<keyword id="KW-0233">DNA recombination</keyword>
<keyword id="KW-0234">DNA repair</keyword>
<keyword id="KW-0238">DNA-binding</keyword>
<feature type="chain" id="PRO_1000195129" description="Holliday junction branch migration complex subunit RuvA">
    <location>
        <begin position="1"/>
        <end position="197"/>
    </location>
</feature>
<feature type="region of interest" description="Domain I" evidence="1">
    <location>
        <begin position="1"/>
        <end position="64"/>
    </location>
</feature>
<feature type="region of interest" description="Domain II" evidence="1">
    <location>
        <begin position="65"/>
        <end position="144"/>
    </location>
</feature>
<feature type="region of interest" description="Flexible linker" evidence="1">
    <location>
        <begin position="145"/>
        <end position="149"/>
    </location>
</feature>
<feature type="region of interest" description="Domain III" evidence="1">
    <location>
        <begin position="149"/>
        <end position="197"/>
    </location>
</feature>
<organism>
    <name type="scientific">Clostridium botulinum (strain Kyoto / Type A2)</name>
    <dbReference type="NCBI Taxonomy" id="536232"/>
    <lineage>
        <taxon>Bacteria</taxon>
        <taxon>Bacillati</taxon>
        <taxon>Bacillota</taxon>
        <taxon>Clostridia</taxon>
        <taxon>Eubacteriales</taxon>
        <taxon>Clostridiaceae</taxon>
        <taxon>Clostridium</taxon>
    </lineage>
</organism>
<protein>
    <recommendedName>
        <fullName evidence="1">Holliday junction branch migration complex subunit RuvA</fullName>
    </recommendedName>
</protein>
<proteinExistence type="inferred from homology"/>
<reference key="1">
    <citation type="submission" date="2008-10" db="EMBL/GenBank/DDBJ databases">
        <title>Genome sequence of Clostridium botulinum A2 Kyoto.</title>
        <authorList>
            <person name="Shrivastava S."/>
            <person name="Brinkac L.M."/>
            <person name="Brown J.L."/>
            <person name="Bruce D."/>
            <person name="Detter C.C."/>
            <person name="Johnson E.A."/>
            <person name="Munk C.A."/>
            <person name="Smith L.A."/>
            <person name="Smith T.J."/>
            <person name="Sutton G."/>
            <person name="Brettin T.S."/>
        </authorList>
    </citation>
    <scope>NUCLEOTIDE SEQUENCE [LARGE SCALE GENOMIC DNA]</scope>
    <source>
        <strain>Kyoto / Type A2</strain>
    </source>
</reference>
<sequence length="197" mass="22229">MYEYIKGKYIDMYKDYIVIENNNIGYKIYTSGSTMAKLPSIGENIMLYTEQIVREDFIGVYGFLTKDELSMFKLLLTINGVGAKASLSLLSISNVSTLKYAIKMGDEKTITRAPGIGKKTAQRIILELKDKIEIDILEEDDEQIINKVTDDKKVLEAVAALVTLGYSEKEANKVINSCDKNNSLEQIIKEALKYLMK</sequence>
<evidence type="ECO:0000255" key="1">
    <source>
        <dbReference type="HAMAP-Rule" id="MF_00031"/>
    </source>
</evidence>
<dbReference type="EMBL" id="CP001581">
    <property type="protein sequence ID" value="ACO84485.1"/>
    <property type="molecule type" value="Genomic_DNA"/>
</dbReference>
<dbReference type="RefSeq" id="WP_003357846.1">
    <property type="nucleotide sequence ID" value="NC_012563.1"/>
</dbReference>
<dbReference type="SMR" id="C1FKG2"/>
<dbReference type="KEGG" id="cby:CLM_3476"/>
<dbReference type="eggNOG" id="COG0632">
    <property type="taxonomic scope" value="Bacteria"/>
</dbReference>
<dbReference type="HOGENOM" id="CLU_087936_3_0_9"/>
<dbReference type="Proteomes" id="UP000001374">
    <property type="component" value="Chromosome"/>
</dbReference>
<dbReference type="GO" id="GO:0005737">
    <property type="term" value="C:cytoplasm"/>
    <property type="evidence" value="ECO:0007669"/>
    <property type="project" value="UniProtKB-SubCell"/>
</dbReference>
<dbReference type="GO" id="GO:0009379">
    <property type="term" value="C:Holliday junction helicase complex"/>
    <property type="evidence" value="ECO:0007669"/>
    <property type="project" value="InterPro"/>
</dbReference>
<dbReference type="GO" id="GO:0048476">
    <property type="term" value="C:Holliday junction resolvase complex"/>
    <property type="evidence" value="ECO:0007669"/>
    <property type="project" value="UniProtKB-UniRule"/>
</dbReference>
<dbReference type="GO" id="GO:0005524">
    <property type="term" value="F:ATP binding"/>
    <property type="evidence" value="ECO:0007669"/>
    <property type="project" value="InterPro"/>
</dbReference>
<dbReference type="GO" id="GO:0000400">
    <property type="term" value="F:four-way junction DNA binding"/>
    <property type="evidence" value="ECO:0007669"/>
    <property type="project" value="UniProtKB-UniRule"/>
</dbReference>
<dbReference type="GO" id="GO:0009378">
    <property type="term" value="F:four-way junction helicase activity"/>
    <property type="evidence" value="ECO:0007669"/>
    <property type="project" value="InterPro"/>
</dbReference>
<dbReference type="GO" id="GO:0006310">
    <property type="term" value="P:DNA recombination"/>
    <property type="evidence" value="ECO:0007669"/>
    <property type="project" value="UniProtKB-UniRule"/>
</dbReference>
<dbReference type="GO" id="GO:0006281">
    <property type="term" value="P:DNA repair"/>
    <property type="evidence" value="ECO:0007669"/>
    <property type="project" value="UniProtKB-UniRule"/>
</dbReference>
<dbReference type="CDD" id="cd14332">
    <property type="entry name" value="UBA_RuvA_C"/>
    <property type="match status" value="1"/>
</dbReference>
<dbReference type="Gene3D" id="1.10.150.20">
    <property type="entry name" value="5' to 3' exonuclease, C-terminal subdomain"/>
    <property type="match status" value="1"/>
</dbReference>
<dbReference type="Gene3D" id="1.10.8.10">
    <property type="entry name" value="DNA helicase RuvA subunit, C-terminal domain"/>
    <property type="match status" value="1"/>
</dbReference>
<dbReference type="Gene3D" id="2.40.50.140">
    <property type="entry name" value="Nucleic acid-binding proteins"/>
    <property type="match status" value="1"/>
</dbReference>
<dbReference type="HAMAP" id="MF_00031">
    <property type="entry name" value="DNA_HJ_migration_RuvA"/>
    <property type="match status" value="1"/>
</dbReference>
<dbReference type="InterPro" id="IPR013849">
    <property type="entry name" value="DNA_helicase_Holl-junc_RuvA_I"/>
</dbReference>
<dbReference type="InterPro" id="IPR012340">
    <property type="entry name" value="NA-bd_OB-fold"/>
</dbReference>
<dbReference type="InterPro" id="IPR000085">
    <property type="entry name" value="RuvA"/>
</dbReference>
<dbReference type="InterPro" id="IPR010994">
    <property type="entry name" value="RuvA_2-like"/>
</dbReference>
<dbReference type="InterPro" id="IPR011114">
    <property type="entry name" value="RuvA_C"/>
</dbReference>
<dbReference type="InterPro" id="IPR036267">
    <property type="entry name" value="RuvA_C_sf"/>
</dbReference>
<dbReference type="NCBIfam" id="TIGR00084">
    <property type="entry name" value="ruvA"/>
    <property type="match status" value="1"/>
</dbReference>
<dbReference type="Pfam" id="PF14520">
    <property type="entry name" value="HHH_5"/>
    <property type="match status" value="1"/>
</dbReference>
<dbReference type="Pfam" id="PF07499">
    <property type="entry name" value="RuvA_C"/>
    <property type="match status" value="1"/>
</dbReference>
<dbReference type="Pfam" id="PF01330">
    <property type="entry name" value="RuvA_N"/>
    <property type="match status" value="1"/>
</dbReference>
<dbReference type="SUPFAM" id="SSF46929">
    <property type="entry name" value="DNA helicase RuvA subunit, C-terminal domain"/>
    <property type="match status" value="1"/>
</dbReference>
<dbReference type="SUPFAM" id="SSF50249">
    <property type="entry name" value="Nucleic acid-binding proteins"/>
    <property type="match status" value="1"/>
</dbReference>
<dbReference type="SUPFAM" id="SSF47781">
    <property type="entry name" value="RuvA domain 2-like"/>
    <property type="match status" value="1"/>
</dbReference>